<keyword id="KW-0007">Acetylation</keyword>
<keyword id="KW-0966">Cell projection</keyword>
<keyword id="KW-0140">cGMP</keyword>
<keyword id="KW-0225">Disease variant</keyword>
<keyword id="KW-0378">Hydrolase</keyword>
<keyword id="KW-0449">Lipoprotein</keyword>
<keyword id="KW-0472">Membrane</keyword>
<keyword id="KW-0479">Metal-binding</keyword>
<keyword id="KW-0636">Prenylation</keyword>
<keyword id="KW-1185">Reference proteome</keyword>
<keyword id="KW-0677">Repeat</keyword>
<keyword id="KW-0716">Sensory transduction</keyword>
<keyword id="KW-0844">Vision</keyword>
<protein>
    <recommendedName>
        <fullName evidence="4">Rod cGMP-specific 3',5'-cyclic phosphodiesterase subunit beta</fullName>
        <shortName>GMP-PDE beta</shortName>
        <ecNumber evidence="7">3.1.4.35</ecNumber>
    </recommendedName>
</protein>
<sequence length="856" mass="98462">MSLSEEQVQHFLDQNPDFTDQYFGKTLSPEHVAGACGDGQPTDCASFRELCQVEESAALFELVQDMQESVNMERVVFKILRRLCTILRADRCSLFMYRQRNGVAELATRLFSVQPGSALEDCLVPPDSEIVFPLDIGVVGHVAQTKKMVNVQDVTECPHFSPFADELTGYETRNILATPIMNGKDVVAVIMALNKLDGPCFTSEDEDVFLKYLNFGTLNLKIYHLSYLHNCETRRGQVLLWSANKVFEELTDIERQFHKAFYTVRAYLNCDRYSVGLLDMTKEKEFFDVWPVLMGEAQPYSGPRTPDGREIVFYKVIDYILHGKEDIKVIPSPPADHWALASGLPTYVAESGFICNIMNTAADEMFTFQEGPLDDSGWVIKNVLSMPIVNKKEEIVGVATFYNRKDGKPFDEQDEVLMESLTQFLGWSVLNTDTYDKMNKLENRKDIAQDMVLYHVRCDKDEIQLILPTRERLGKEPADCEEDELGILLKEVLPGPSKFDIYEFHFSDLECTELELVKCGIQMYYELGVVRKFQIPQEVLVRFLFSVSKGYRRITYHNWRHGFNVAQTMFTLLTTGKLKSYYTDLEAFAMVTAGLCHDIDHRGTNNLYQMKSQNPLAKLHGSSILERHHLEFGKFLLSEETLNIYQNLNRRQHEHVIHLMDIAIIATDLALYFKKRTMFQKIVDESKNYEDRKSWVEYLSLETTRKEIVMAMMMTACDLSAITKPWEVQSKVALLVAAEFWEQGDLERTVLDQQPIPMMDRNKAAELPKLQVGFIDFVCTFVYKEFSRFHEEILPMFDRLQNNRKEWKALADEYEAKLKALEEEKQQQEDRTTAKKAGTEICNGGPAPKSSTCCIL</sequence>
<name>PDE6B_CANLF</name>
<comment type="function">
    <text evidence="3 4 7">Rod-specific cGMP phosphodiesterase that catalyzes the hydrolysis of 3',5'-cyclic GMP (PubMed:8387203). Necessary for the formation of a functional phosphodiesterase holoenzyme (By similarity). Involved in retinal circadian rhythm photoentrainment via modulation of UVA and orange light-induced phase-shift of the retina clock (By similarity). May participate in processes of transmission and amplification of the visual signal (By similarity).</text>
</comment>
<comment type="catalytic activity">
    <reaction evidence="7">
        <text>3',5'-cyclic GMP + H2O = GMP + H(+)</text>
        <dbReference type="Rhea" id="RHEA:16957"/>
        <dbReference type="ChEBI" id="CHEBI:15377"/>
        <dbReference type="ChEBI" id="CHEBI:15378"/>
        <dbReference type="ChEBI" id="CHEBI:57746"/>
        <dbReference type="ChEBI" id="CHEBI:58115"/>
        <dbReference type="EC" id="3.1.4.35"/>
    </reaction>
    <physiologicalReaction direction="left-to-right" evidence="9">
        <dbReference type="Rhea" id="RHEA:16958"/>
    </physiologicalReaction>
</comment>
<comment type="cofactor">
    <cofactor evidence="1">
        <name>a divalent metal cation</name>
        <dbReference type="ChEBI" id="CHEBI:60240"/>
    </cofactor>
    <text evidence="1">Binds 2 divalent metal cations per subunit. Site 1 may preferentially bind zinc ions, while site 2 has a preference for magnesium and/or manganese ions.</text>
</comment>
<comment type="subunit">
    <text>Oligomer composed of two catalytic chains (alpha and beta), an inhibitory chain (gamma) and the delta chain.</text>
</comment>
<comment type="subcellular location">
    <subcellularLocation>
        <location evidence="4">Membrane</location>
        <topology evidence="4">Lipid-anchor</topology>
    </subcellularLocation>
    <subcellularLocation>
        <location evidence="4">Cell projection</location>
        <location evidence="4">Cilium</location>
        <location evidence="4">Photoreceptor outer segment</location>
    </subcellularLocation>
</comment>
<comment type="disease">
    <text evidence="7">Irish setter dogs affected with rod/cone dysplasia (RCD1) contain a nonsense mutation in the gene that gives rise to a protein of 807 AA lacking 49 AA in the C-terminal.</text>
</comment>
<comment type="similarity">
    <text evidence="8">Belongs to the cyclic nucleotide phosphodiesterase family.</text>
</comment>
<evidence type="ECO:0000250" key="1"/>
<evidence type="ECO:0000250" key="2">
    <source>
        <dbReference type="UniProtKB" id="P23439"/>
    </source>
</evidence>
<evidence type="ECO:0000250" key="3">
    <source>
        <dbReference type="UniProtKB" id="P23440"/>
    </source>
</evidence>
<evidence type="ECO:0000250" key="4">
    <source>
        <dbReference type="UniProtKB" id="P35913"/>
    </source>
</evidence>
<evidence type="ECO:0000255" key="5">
    <source>
        <dbReference type="PROSITE-ProRule" id="PRU01192"/>
    </source>
</evidence>
<evidence type="ECO:0000256" key="6">
    <source>
        <dbReference type="SAM" id="MobiDB-lite"/>
    </source>
</evidence>
<evidence type="ECO:0000269" key="7">
    <source>
    </source>
</evidence>
<evidence type="ECO:0000305" key="8"/>
<evidence type="ECO:0000305" key="9">
    <source>
    </source>
</evidence>
<dbReference type="EC" id="3.1.4.35" evidence="7"/>
<dbReference type="EMBL" id="Z23014">
    <property type="protein sequence ID" value="CAA80557.1"/>
    <property type="molecule type" value="mRNA"/>
</dbReference>
<dbReference type="EMBL" id="L13262">
    <property type="protein sequence ID" value="AAA30882.1"/>
    <property type="status" value="ALT_SEQ"/>
    <property type="molecule type" value="mRNA"/>
</dbReference>
<dbReference type="PIR" id="A47451">
    <property type="entry name" value="A47451"/>
</dbReference>
<dbReference type="RefSeq" id="NP_001002934.2">
    <property type="nucleotide sequence ID" value="NM_001002934.2"/>
</dbReference>
<dbReference type="SMR" id="P33726"/>
<dbReference type="FunCoup" id="P33726">
    <property type="interactions" value="4"/>
</dbReference>
<dbReference type="STRING" id="9615.ENSCAFP00000024683"/>
<dbReference type="PaxDb" id="9612-ENSCAFP00000024683"/>
<dbReference type="Ensembl" id="ENSCAFT00000026577.4">
    <property type="protein sequence ID" value="ENSCAFP00000024683.3"/>
    <property type="gene ID" value="ENSCAFG00000016782.5"/>
</dbReference>
<dbReference type="Ensembl" id="ENSCAFT00030038883.1">
    <property type="protein sequence ID" value="ENSCAFP00030033913.1"/>
    <property type="gene ID" value="ENSCAFG00030021135.1"/>
</dbReference>
<dbReference type="Ensembl" id="ENSCAFT00040007999.1">
    <property type="protein sequence ID" value="ENSCAFP00040006969.1"/>
    <property type="gene ID" value="ENSCAFG00040004174.1"/>
</dbReference>
<dbReference type="GeneID" id="399653"/>
<dbReference type="KEGG" id="cfa:399653"/>
<dbReference type="CTD" id="5158"/>
<dbReference type="VGNC" id="VGNC:44358">
    <property type="gene designation" value="PDE6B"/>
</dbReference>
<dbReference type="eggNOG" id="KOG3689">
    <property type="taxonomic scope" value="Eukaryota"/>
</dbReference>
<dbReference type="HOGENOM" id="CLU_006980_2_0_1"/>
<dbReference type="InParanoid" id="P33726"/>
<dbReference type="OMA" id="REVYDCE"/>
<dbReference type="OrthoDB" id="546632at2759"/>
<dbReference type="TreeFam" id="TF316499"/>
<dbReference type="Reactome" id="R-CFA-2485179">
    <property type="pathway name" value="Activation of the phototransduction cascade"/>
</dbReference>
<dbReference type="Reactome" id="R-CFA-2514859">
    <property type="pathway name" value="Inactivation, recovery and regulation of the phototransduction cascade"/>
</dbReference>
<dbReference type="Reactome" id="R-CFA-4086398">
    <property type="pathway name" value="Ca2+ pathway"/>
</dbReference>
<dbReference type="Proteomes" id="UP000002254">
    <property type="component" value="Chromosome 3"/>
</dbReference>
<dbReference type="Proteomes" id="UP000694429">
    <property type="component" value="Chromosome 3"/>
</dbReference>
<dbReference type="Proteomes" id="UP000694542">
    <property type="component" value="Chromosome 3"/>
</dbReference>
<dbReference type="Proteomes" id="UP000805418">
    <property type="component" value="Unplaced"/>
</dbReference>
<dbReference type="Bgee" id="ENSCAFG00000016782">
    <property type="expression patterns" value="Expressed in testis and 11 other cell types or tissues"/>
</dbReference>
<dbReference type="GO" id="GO:0042622">
    <property type="term" value="C:photoreceptor outer segment membrane"/>
    <property type="evidence" value="ECO:0000318"/>
    <property type="project" value="GO_Central"/>
</dbReference>
<dbReference type="GO" id="GO:0004115">
    <property type="term" value="F:3',5'-cyclic-AMP phosphodiesterase activity"/>
    <property type="evidence" value="ECO:0000318"/>
    <property type="project" value="GO_Central"/>
</dbReference>
<dbReference type="GO" id="GO:0047555">
    <property type="term" value="F:3',5'-cyclic-GMP phosphodiesterase activity"/>
    <property type="evidence" value="ECO:0000318"/>
    <property type="project" value="GO_Central"/>
</dbReference>
<dbReference type="GO" id="GO:0046872">
    <property type="term" value="F:metal ion binding"/>
    <property type="evidence" value="ECO:0007669"/>
    <property type="project" value="UniProtKB-KW"/>
</dbReference>
<dbReference type="GO" id="GO:0019933">
    <property type="term" value="P:cAMP-mediated signaling"/>
    <property type="evidence" value="ECO:0000318"/>
    <property type="project" value="GO_Central"/>
</dbReference>
<dbReference type="GO" id="GO:0043153">
    <property type="term" value="P:entrainment of circadian clock by photoperiod"/>
    <property type="evidence" value="ECO:0000250"/>
    <property type="project" value="UniProtKB"/>
</dbReference>
<dbReference type="GO" id="GO:0060041">
    <property type="term" value="P:retina development in camera-type eye"/>
    <property type="evidence" value="ECO:0000318"/>
    <property type="project" value="GO_Central"/>
</dbReference>
<dbReference type="GO" id="GO:0007601">
    <property type="term" value="P:visual perception"/>
    <property type="evidence" value="ECO:0007669"/>
    <property type="project" value="UniProtKB-KW"/>
</dbReference>
<dbReference type="CDD" id="cd00077">
    <property type="entry name" value="HDc"/>
    <property type="match status" value="1"/>
</dbReference>
<dbReference type="FunFam" id="1.10.1300.10:FF:000005">
    <property type="entry name" value="Phosphodiesterase"/>
    <property type="match status" value="1"/>
</dbReference>
<dbReference type="FunFam" id="3.30.450.40:FF:000001">
    <property type="entry name" value="Phosphodiesterase"/>
    <property type="match status" value="1"/>
</dbReference>
<dbReference type="FunFam" id="3.30.450.40:FF:000010">
    <property type="entry name" value="Phosphodiesterase"/>
    <property type="match status" value="1"/>
</dbReference>
<dbReference type="Gene3D" id="3.30.450.40">
    <property type="match status" value="2"/>
</dbReference>
<dbReference type="Gene3D" id="1.10.1300.10">
    <property type="entry name" value="3'5'-cyclic nucleotide phosphodiesterase, catalytic domain"/>
    <property type="match status" value="1"/>
</dbReference>
<dbReference type="InterPro" id="IPR003018">
    <property type="entry name" value="GAF"/>
</dbReference>
<dbReference type="InterPro" id="IPR029016">
    <property type="entry name" value="GAF-like_dom_sf"/>
</dbReference>
<dbReference type="InterPro" id="IPR003607">
    <property type="entry name" value="HD/PDEase_dom"/>
</dbReference>
<dbReference type="InterPro" id="IPR023088">
    <property type="entry name" value="PDEase"/>
</dbReference>
<dbReference type="InterPro" id="IPR002073">
    <property type="entry name" value="PDEase_catalytic_dom"/>
</dbReference>
<dbReference type="InterPro" id="IPR036971">
    <property type="entry name" value="PDEase_catalytic_dom_sf"/>
</dbReference>
<dbReference type="InterPro" id="IPR023174">
    <property type="entry name" value="PDEase_CS"/>
</dbReference>
<dbReference type="PANTHER" id="PTHR11347">
    <property type="entry name" value="CYCLIC NUCLEOTIDE PHOSPHODIESTERASE"/>
    <property type="match status" value="1"/>
</dbReference>
<dbReference type="Pfam" id="PF01590">
    <property type="entry name" value="GAF"/>
    <property type="match status" value="2"/>
</dbReference>
<dbReference type="Pfam" id="PF00233">
    <property type="entry name" value="PDEase_I"/>
    <property type="match status" value="1"/>
</dbReference>
<dbReference type="PRINTS" id="PR00387">
    <property type="entry name" value="PDIESTERASE1"/>
</dbReference>
<dbReference type="SMART" id="SM00065">
    <property type="entry name" value="GAF"/>
    <property type="match status" value="2"/>
</dbReference>
<dbReference type="SMART" id="SM00471">
    <property type="entry name" value="HDc"/>
    <property type="match status" value="1"/>
</dbReference>
<dbReference type="SUPFAM" id="SSF55781">
    <property type="entry name" value="GAF domain-like"/>
    <property type="match status" value="2"/>
</dbReference>
<dbReference type="SUPFAM" id="SSF109604">
    <property type="entry name" value="HD-domain/PDEase-like"/>
    <property type="match status" value="1"/>
</dbReference>
<dbReference type="PROSITE" id="PS00126">
    <property type="entry name" value="PDEASE_I_1"/>
    <property type="match status" value="1"/>
</dbReference>
<dbReference type="PROSITE" id="PS51845">
    <property type="entry name" value="PDEASE_I_2"/>
    <property type="match status" value="1"/>
</dbReference>
<reference key="1">
    <citation type="journal article" date="1993" name="Proc. Natl. Acad. Sci. U.S.A.">
        <title>Irish setter dogs affected with rod/cone dysplasia contain a nonsense mutation in the rod cGMP phosphodiesterase beta-subunit gene.</title>
        <authorList>
            <person name="Suber M.L."/>
            <person name="Pittler S.J."/>
            <person name="Qin N."/>
            <person name="Wright G.C."/>
            <person name="Holcombe V."/>
            <person name="Lee R.H."/>
            <person name="Craft C.M."/>
            <person name="Lolley R.N."/>
            <person name="Baehr W.B."/>
            <person name="Hurwitz R.L."/>
        </authorList>
    </citation>
    <scope>NUCLEOTIDE SEQUENCE [MRNA]</scope>
    <scope>CATALYTIC ACTIVITY</scope>
    <scope>FUNCTION</scope>
    <source>
        <strain>Red setter</strain>
        <tissue>Retina</tissue>
    </source>
</reference>
<reference key="2">
    <citation type="submission" date="1993-06" db="EMBL/GenBank/DDBJ databases">
        <authorList>
            <person name="Clements P.J."/>
        </authorList>
    </citation>
    <scope>NUCLEOTIDE SEQUENCE [MRNA]</scope>
    <source>
        <strain>Boxer X Doberman</strain>
        <tissue>Retina</tissue>
    </source>
</reference>
<gene>
    <name evidence="4" type="primary">PDE6B</name>
    <name type="synonym">PDBS</name>
    <name type="synonym">PDEB</name>
</gene>
<proteinExistence type="evidence at protein level"/>
<organism>
    <name type="scientific">Canis lupus familiaris</name>
    <name type="common">Dog</name>
    <name type="synonym">Canis familiaris</name>
    <dbReference type="NCBI Taxonomy" id="9615"/>
    <lineage>
        <taxon>Eukaryota</taxon>
        <taxon>Metazoa</taxon>
        <taxon>Chordata</taxon>
        <taxon>Craniata</taxon>
        <taxon>Vertebrata</taxon>
        <taxon>Euteleostomi</taxon>
        <taxon>Mammalia</taxon>
        <taxon>Eutheria</taxon>
        <taxon>Laurasiatheria</taxon>
        <taxon>Carnivora</taxon>
        <taxon>Caniformia</taxon>
        <taxon>Canidae</taxon>
        <taxon>Canis</taxon>
    </lineage>
</organism>
<accession>P33726</accession>
<feature type="initiator methionine" description="Removed" evidence="2">
    <location>
        <position position="1"/>
    </location>
</feature>
<feature type="chain" id="PRO_0000023346" description="Rod cGMP-specific 3',5'-cyclic phosphodiesterase subunit beta">
    <location>
        <begin position="2"/>
        <end position="853"/>
    </location>
</feature>
<feature type="propeptide" id="PRO_0000023347" description="Removed in mature form" evidence="1">
    <location>
        <begin position="854"/>
        <end position="856"/>
    </location>
</feature>
<feature type="domain" description="GAF 1">
    <location>
        <begin position="71"/>
        <end position="220"/>
    </location>
</feature>
<feature type="domain" description="GAF 2">
    <location>
        <begin position="252"/>
        <end position="429"/>
    </location>
</feature>
<feature type="domain" description="PDEase" evidence="5">
    <location>
        <begin position="481"/>
        <end position="814"/>
    </location>
</feature>
<feature type="region of interest" description="Disordered" evidence="6">
    <location>
        <begin position="823"/>
        <end position="842"/>
    </location>
</feature>
<feature type="compositionally biased region" description="Basic and acidic residues" evidence="6">
    <location>
        <begin position="823"/>
        <end position="833"/>
    </location>
</feature>
<feature type="active site" description="Proton donor" evidence="1">
    <location>
        <position position="557"/>
    </location>
</feature>
<feature type="binding site" evidence="1">
    <location>
        <position position="561"/>
    </location>
    <ligand>
        <name>a divalent metal cation</name>
        <dbReference type="ChEBI" id="CHEBI:60240"/>
        <label>1</label>
    </ligand>
</feature>
<feature type="binding site" evidence="1">
    <location>
        <position position="597"/>
    </location>
    <ligand>
        <name>a divalent metal cation</name>
        <dbReference type="ChEBI" id="CHEBI:60240"/>
        <label>1</label>
    </ligand>
</feature>
<feature type="binding site" evidence="1">
    <location>
        <position position="598"/>
    </location>
    <ligand>
        <name>a divalent metal cation</name>
        <dbReference type="ChEBI" id="CHEBI:60240"/>
        <label>1</label>
    </ligand>
</feature>
<feature type="binding site" evidence="1">
    <location>
        <position position="598"/>
    </location>
    <ligand>
        <name>a divalent metal cation</name>
        <dbReference type="ChEBI" id="CHEBI:60240"/>
        <label>2</label>
    </ligand>
</feature>
<feature type="binding site" evidence="1">
    <location>
        <position position="718"/>
    </location>
    <ligand>
        <name>a divalent metal cation</name>
        <dbReference type="ChEBI" id="CHEBI:60240"/>
        <label>1</label>
    </ligand>
</feature>
<feature type="modified residue" description="N-acetylserine" evidence="2">
    <location>
        <position position="2"/>
    </location>
</feature>
<feature type="lipid moiety-binding region" description="S-geranylgeranyl cysteine" evidence="1">
    <location>
        <position position="853"/>
    </location>
</feature>